<proteinExistence type="inferred from homology"/>
<gene>
    <name evidence="1" type="primary">iolA</name>
</gene>
<evidence type="ECO:0000255" key="1">
    <source>
        <dbReference type="HAMAP-Rule" id="MF_01670"/>
    </source>
</evidence>
<organism>
    <name type="scientific">Lacticaseibacillus casei</name>
    <name type="common">Lactobacillus casei</name>
    <dbReference type="NCBI Taxonomy" id="1582"/>
    <lineage>
        <taxon>Bacteria</taxon>
        <taxon>Bacillati</taxon>
        <taxon>Bacillota</taxon>
        <taxon>Bacilli</taxon>
        <taxon>Lactobacillales</taxon>
        <taxon>Lactobacillaceae</taxon>
        <taxon>Lacticaseibacillus</taxon>
    </lineage>
</organism>
<comment type="function">
    <text evidence="1">Catalyzes the oxidation of malonate semialdehyde (MSA) and methylmalonate semialdehyde (MMSA) into acetyl-CoA and propanoyl-CoA, respectively. Is involved in a myo-inositol catabolic pathway. Bicarbonate, and not CO2, is the end-product of the enzymatic reaction.</text>
</comment>
<comment type="catalytic activity">
    <reaction evidence="1">
        <text>3-oxopropanoate + NAD(+) + CoA + H2O = hydrogencarbonate + acetyl-CoA + NADH + H(+)</text>
        <dbReference type="Rhea" id="RHEA:76615"/>
        <dbReference type="ChEBI" id="CHEBI:15377"/>
        <dbReference type="ChEBI" id="CHEBI:15378"/>
        <dbReference type="ChEBI" id="CHEBI:17544"/>
        <dbReference type="ChEBI" id="CHEBI:33190"/>
        <dbReference type="ChEBI" id="CHEBI:57287"/>
        <dbReference type="ChEBI" id="CHEBI:57288"/>
        <dbReference type="ChEBI" id="CHEBI:57540"/>
        <dbReference type="ChEBI" id="CHEBI:57945"/>
        <dbReference type="EC" id="1.2.1.27"/>
    </reaction>
    <physiologicalReaction direction="left-to-right" evidence="1">
        <dbReference type="Rhea" id="RHEA:76616"/>
    </physiologicalReaction>
</comment>
<comment type="catalytic activity">
    <reaction evidence="1">
        <text>2-methyl-3-oxopropanoate + NAD(+) + CoA + H2O = propanoyl-CoA + hydrogencarbonate + NADH + H(+)</text>
        <dbReference type="Rhea" id="RHEA:20804"/>
        <dbReference type="ChEBI" id="CHEBI:15377"/>
        <dbReference type="ChEBI" id="CHEBI:15378"/>
        <dbReference type="ChEBI" id="CHEBI:17544"/>
        <dbReference type="ChEBI" id="CHEBI:57287"/>
        <dbReference type="ChEBI" id="CHEBI:57392"/>
        <dbReference type="ChEBI" id="CHEBI:57540"/>
        <dbReference type="ChEBI" id="CHEBI:57700"/>
        <dbReference type="ChEBI" id="CHEBI:57945"/>
        <dbReference type="EC" id="1.2.1.27"/>
    </reaction>
    <physiologicalReaction direction="left-to-right" evidence="1">
        <dbReference type="Rhea" id="RHEA:20805"/>
    </physiologicalReaction>
</comment>
<comment type="pathway">
    <text evidence="1">Polyol metabolism; myo-inositol degradation into acetyl-CoA; acetyl-CoA from myo-inositol: step 7/7.</text>
</comment>
<comment type="subunit">
    <text evidence="1">Homotetramer.</text>
</comment>
<comment type="similarity">
    <text evidence="1">Belongs to the aldehyde dehydrogenase family. IolA subfamily.</text>
</comment>
<reference key="1">
    <citation type="journal article" date="2007" name="Appl. Environ. Microbiol.">
        <title>Identification of a gene cluster allowing Lactobacillus casei BL23 the utilization of myo-inositol.</title>
        <authorList>
            <person name="Yebra M.J."/>
            <person name="Zuniga M."/>
            <person name="Beaufils S."/>
            <person name="Perez-Martinez G."/>
            <person name="Deutscher J."/>
            <person name="Monedero V."/>
        </authorList>
    </citation>
    <scope>NUCLEOTIDE SEQUENCE [GENOMIC DNA]</scope>
    <source>
        <strain>BL23</strain>
    </source>
</reference>
<dbReference type="EC" id="1.2.1.27" evidence="1"/>
<dbReference type="EMBL" id="EF382358">
    <property type="protein sequence ID" value="ABP57762.1"/>
    <property type="molecule type" value="Genomic_DNA"/>
</dbReference>
<dbReference type="SMR" id="A5YBJ3"/>
<dbReference type="STRING" id="1582.AAW28_06915"/>
<dbReference type="eggNOG" id="COG1012">
    <property type="taxonomic scope" value="Bacteria"/>
</dbReference>
<dbReference type="OMA" id="VEYATYV"/>
<dbReference type="UniPathway" id="UPA00076">
    <property type="reaction ID" value="UER00148"/>
</dbReference>
<dbReference type="GO" id="GO:0018478">
    <property type="term" value="F:malonate-semialdehyde dehydrogenase (acetylating) activity"/>
    <property type="evidence" value="ECO:0007669"/>
    <property type="project" value="UniProtKB-UniRule"/>
</dbReference>
<dbReference type="GO" id="GO:0004491">
    <property type="term" value="F:methylmalonate-semialdehyde dehydrogenase (acylating, NAD) activity"/>
    <property type="evidence" value="ECO:0007669"/>
    <property type="project" value="UniProtKB-UniRule"/>
</dbReference>
<dbReference type="GO" id="GO:0019310">
    <property type="term" value="P:inositol catabolic process"/>
    <property type="evidence" value="ECO:0007669"/>
    <property type="project" value="UniProtKB-UniRule"/>
</dbReference>
<dbReference type="GO" id="GO:0006210">
    <property type="term" value="P:thymine catabolic process"/>
    <property type="evidence" value="ECO:0007669"/>
    <property type="project" value="TreeGrafter"/>
</dbReference>
<dbReference type="GO" id="GO:0006574">
    <property type="term" value="P:valine catabolic process"/>
    <property type="evidence" value="ECO:0007669"/>
    <property type="project" value="TreeGrafter"/>
</dbReference>
<dbReference type="CDD" id="cd07085">
    <property type="entry name" value="ALDH_F6_MMSDH"/>
    <property type="match status" value="1"/>
</dbReference>
<dbReference type="FunFam" id="3.40.309.10:FF:000002">
    <property type="entry name" value="Methylmalonate-semialdehyde dehydrogenase (Acylating)"/>
    <property type="match status" value="1"/>
</dbReference>
<dbReference type="FunFam" id="3.40.605.10:FF:000003">
    <property type="entry name" value="Methylmalonate-semialdehyde dehydrogenase [acylating]"/>
    <property type="match status" value="1"/>
</dbReference>
<dbReference type="Gene3D" id="3.40.605.10">
    <property type="entry name" value="Aldehyde Dehydrogenase, Chain A, domain 1"/>
    <property type="match status" value="1"/>
</dbReference>
<dbReference type="Gene3D" id="3.40.309.10">
    <property type="entry name" value="Aldehyde Dehydrogenase, Chain A, domain 2"/>
    <property type="match status" value="1"/>
</dbReference>
<dbReference type="HAMAP" id="MF_01670">
    <property type="entry name" value="IolA"/>
    <property type="match status" value="1"/>
</dbReference>
<dbReference type="InterPro" id="IPR016161">
    <property type="entry name" value="Ald_DH/histidinol_DH"/>
</dbReference>
<dbReference type="InterPro" id="IPR016163">
    <property type="entry name" value="Ald_DH_C"/>
</dbReference>
<dbReference type="InterPro" id="IPR016160">
    <property type="entry name" value="Ald_DH_CS_CYS"/>
</dbReference>
<dbReference type="InterPro" id="IPR016162">
    <property type="entry name" value="Ald_DH_N"/>
</dbReference>
<dbReference type="InterPro" id="IPR015590">
    <property type="entry name" value="Aldehyde_DH_dom"/>
</dbReference>
<dbReference type="InterPro" id="IPR010061">
    <property type="entry name" value="MeMal-semiAld_DH"/>
</dbReference>
<dbReference type="InterPro" id="IPR023510">
    <property type="entry name" value="MSDH_GmP_bac"/>
</dbReference>
<dbReference type="NCBIfam" id="TIGR01722">
    <property type="entry name" value="MMSDH"/>
    <property type="match status" value="1"/>
</dbReference>
<dbReference type="PANTHER" id="PTHR43866">
    <property type="entry name" value="MALONATE-SEMIALDEHYDE DEHYDROGENASE"/>
    <property type="match status" value="1"/>
</dbReference>
<dbReference type="PANTHER" id="PTHR43866:SF4">
    <property type="entry name" value="MALONATE-SEMIALDEHYDE DEHYDROGENASE"/>
    <property type="match status" value="1"/>
</dbReference>
<dbReference type="Pfam" id="PF00171">
    <property type="entry name" value="Aldedh"/>
    <property type="match status" value="1"/>
</dbReference>
<dbReference type="SUPFAM" id="SSF53720">
    <property type="entry name" value="ALDH-like"/>
    <property type="match status" value="1"/>
</dbReference>
<dbReference type="PROSITE" id="PS00070">
    <property type="entry name" value="ALDEHYDE_DEHYDR_CYS"/>
    <property type="match status" value="1"/>
</dbReference>
<accession>A5YBJ3</accession>
<sequence>MDTTKQNVKTLKNFINGKWVDAKTETFENVYNPATGDVLARVPHSTSEDVADAVTAAKEAFKIWQKVSIPKRAKILFKYQQLLVEHQEELGRIVTEENGKSLDEAVAEVGRGIENVEFAAGVPTLMMGDSLSSVATDVEATNYRYPIGVVGGITPFNFPMMVPCWMFPMAVATGNTFILKPSEKTPLTSQRLVELFQEAGLPDGVLNIVNGAVDVVNGILDHPDIKAISFVGSERVGEYVYKRGSDHLKRVQALTGAKNHTIVLADADLDAAVKGIISSSFGSAGERCMATSVLVLQDEIADKFMAKFTQAAKDIKIGNGLDKGVFLGPVIRKENQERTLNYIQTGVKEGAKLVLDGSAEAKKHDGYFVGPTIFEDVKTDMTIWHDEMFAPVLSVIRAKDLPQAVAIANTSELANGACLFTDSAASIRYFRENIDAGMLGINLGVPAPIAVFPFSGWKHSFFGTLHANGKDSVDFYTHKKVVTARYDQRRFK</sequence>
<protein>
    <recommendedName>
        <fullName evidence="1">Malonate-semialdehyde dehydrogenase</fullName>
        <shortName evidence="1">MSA dehydrogenase</shortName>
        <ecNumber evidence="1">1.2.1.27</ecNumber>
    </recommendedName>
    <alternativeName>
        <fullName evidence="1">Methylmalonate-semialdehyde dehydrogenase</fullName>
        <shortName evidence="1">MMSA dehydrogenase</shortName>
        <shortName evidence="1">MSDH</shortName>
    </alternativeName>
</protein>
<name>IOLA_LACCA</name>
<keyword id="KW-0520">NAD</keyword>
<keyword id="KW-0560">Oxidoreductase</keyword>
<feature type="chain" id="PRO_0000352344" description="Malonate-semialdehyde dehydrogenase">
    <location>
        <begin position="1"/>
        <end position="492"/>
    </location>
</feature>
<feature type="active site" description="Nucleophile" evidence="1">
    <location>
        <position position="288"/>
    </location>
</feature>
<feature type="binding site" evidence="1">
    <location>
        <position position="156"/>
    </location>
    <ligand>
        <name>NAD(+)</name>
        <dbReference type="ChEBI" id="CHEBI:57540"/>
    </ligand>
</feature>
<feature type="binding site" evidence="1">
    <location>
        <position position="180"/>
    </location>
    <ligand>
        <name>NAD(+)</name>
        <dbReference type="ChEBI" id="CHEBI:57540"/>
    </ligand>
</feature>
<feature type="binding site" evidence="1">
    <location>
        <position position="183"/>
    </location>
    <ligand>
        <name>NAD(+)</name>
        <dbReference type="ChEBI" id="CHEBI:57540"/>
    </ligand>
</feature>
<feature type="binding site" evidence="1">
    <location>
        <position position="184"/>
    </location>
    <ligand>
        <name>NAD(+)</name>
        <dbReference type="ChEBI" id="CHEBI:57540"/>
    </ligand>
</feature>
<feature type="binding site" evidence="1">
    <location>
        <position position="233"/>
    </location>
    <ligand>
        <name>NAD(+)</name>
        <dbReference type="ChEBI" id="CHEBI:57540"/>
    </ligand>
</feature>
<feature type="binding site" evidence="1">
    <location>
        <position position="255"/>
    </location>
    <ligand>
        <name>NAD(+)</name>
        <dbReference type="ChEBI" id="CHEBI:57540"/>
    </ligand>
</feature>
<feature type="binding site" evidence="1">
    <location>
        <position position="387"/>
    </location>
    <ligand>
        <name>NAD(+)</name>
        <dbReference type="ChEBI" id="CHEBI:57540"/>
    </ligand>
</feature>